<comment type="function">
    <text evidence="1">Subunit a, of the mitochondrial membrane ATP synthase complex (F(1)F(0) ATP synthase or Complex V) that produces ATP from ADP in the presence of a proton gradient across the membrane which is generated by electron transport complexes of the respiratory chain. ATP synthase complex consist of a soluble F(1) head domain - the catalytic core - and a membrane F(1) domain - the membrane proton channel. These two domains are linked by a central stalk rotating inside the F(1) region and a stationary peripheral stalk. During catalysis, ATP synthesis in the catalytic domain of F(1) is coupled via a rotary mechanism of the central stalk subunits to proton translocation. With the subunit c (ATP5MC1), forms the proton-conducting channel in the F(0) domain, that contains two crucial half-channels (inlet and outlet) that facilitate proton movement from the mitochondrial intermembrane space (IMS) into the matrix. Protons are taken up via the inlet half-channel and released through the outlet half-channel, following a Grotthuss mechanism.</text>
</comment>
<comment type="catalytic activity">
    <reaction evidence="1">
        <text>H(+)(in) = H(+)(out)</text>
        <dbReference type="Rhea" id="RHEA:34979"/>
        <dbReference type="ChEBI" id="CHEBI:15378"/>
    </reaction>
</comment>
<comment type="subunit">
    <text evidence="1">Component of the ATP synthase complex composed at least of ATP5F1A/subunit alpha, ATP5F1B/subunit beta, ATP5MC1/subunit c (homooctomer), MT-ATP6/subunit a, MT-ATP8/subunit 8, ATP5ME/subunit e, ATP5MF/subunit f, ATP5MG/subunit g, ATP5MK/subunit k, ATP5MJ/subunit j, ATP5F1C/subunit gamma, ATP5F1D/subunit delta, ATP5F1E/subunit epsilon, ATP5PF/subunit F6, ATP5PB/subunit b, ATP5PD/subunit d, ATP5PO/subunit OSCP. ATP synthase complex consists of a soluble F(1) head domain (subunits alpha(3) and beta(3)) - the catalytic core - and a membrane F(0) domain - the membrane proton channel (subunits c, a, 8, e, f, g, k and j). These two domains are linked by a central stalk (subunits gamma, delta, and epsilon) rotating inside the F1 region and a stationary peripheral stalk (subunits F6, b, d, and OSCP). Interacts with DNAJC30; interaction is direct.</text>
</comment>
<comment type="subcellular location">
    <subcellularLocation>
        <location>Mitochondrion inner membrane</location>
        <topology>Multi-pass membrane protein</topology>
    </subcellularLocation>
</comment>
<comment type="similarity">
    <text evidence="3">Belongs to the ATPase A chain family.</text>
</comment>
<organism>
    <name type="scientific">Pongo abelii</name>
    <name type="common">Sumatran orangutan</name>
    <name type="synonym">Pongo pygmaeus abelii</name>
    <dbReference type="NCBI Taxonomy" id="9601"/>
    <lineage>
        <taxon>Eukaryota</taxon>
        <taxon>Metazoa</taxon>
        <taxon>Chordata</taxon>
        <taxon>Craniata</taxon>
        <taxon>Vertebrata</taxon>
        <taxon>Euteleostomi</taxon>
        <taxon>Mammalia</taxon>
        <taxon>Eutheria</taxon>
        <taxon>Euarchontoglires</taxon>
        <taxon>Primates</taxon>
        <taxon>Haplorrhini</taxon>
        <taxon>Catarrhini</taxon>
        <taxon>Hominidae</taxon>
        <taxon>Pongo</taxon>
    </lineage>
</organism>
<evidence type="ECO:0000250" key="1">
    <source>
        <dbReference type="UniProtKB" id="P00846"/>
    </source>
</evidence>
<evidence type="ECO:0000255" key="2"/>
<evidence type="ECO:0000305" key="3"/>
<protein>
    <recommendedName>
        <fullName evidence="1">ATP synthase F(0) complex subunit a</fullName>
    </recommendedName>
    <alternativeName>
        <fullName>F-ATPase protein 6</fullName>
    </alternativeName>
    <alternativeName>
        <fullName evidence="1">Proton-conducting channel, ATP synthase F(0) complex subunit a</fullName>
    </alternativeName>
</protein>
<name>ATP6_PONAB</name>
<keyword id="KW-0066">ATP synthesis</keyword>
<keyword id="KW-0138">CF(0)</keyword>
<keyword id="KW-0375">Hydrogen ion transport</keyword>
<keyword id="KW-0406">Ion transport</keyword>
<keyword id="KW-0472">Membrane</keyword>
<keyword id="KW-0496">Mitochondrion</keyword>
<keyword id="KW-0999">Mitochondrion inner membrane</keyword>
<keyword id="KW-1185">Reference proteome</keyword>
<keyword id="KW-0812">Transmembrane</keyword>
<keyword id="KW-1133">Transmembrane helix</keyword>
<keyword id="KW-0813">Transport</keyword>
<gene>
    <name evidence="1" type="primary">MT-ATP6</name>
    <name type="synonym">ATP6</name>
    <name type="synonym">ATPASE6</name>
    <name type="synonym">MTATP6</name>
</gene>
<feature type="chain" id="PRO_0000082158" description="ATP synthase F(0) complex subunit a">
    <location>
        <begin position="1"/>
        <end position="226"/>
    </location>
</feature>
<feature type="transmembrane region" description="Helical" evidence="2">
    <location>
        <begin position="12"/>
        <end position="32"/>
    </location>
</feature>
<feature type="transmembrane region" description="Helical" evidence="2">
    <location>
        <begin position="68"/>
        <end position="88"/>
    </location>
</feature>
<feature type="transmembrane region" description="Helical" evidence="2">
    <location>
        <begin position="97"/>
        <end position="117"/>
    </location>
</feature>
<feature type="transmembrane region" description="Helical" evidence="2">
    <location>
        <begin position="138"/>
        <end position="158"/>
    </location>
</feature>
<feature type="transmembrane region" description="Helical" evidence="2">
    <location>
        <begin position="182"/>
        <end position="202"/>
    </location>
</feature>
<feature type="transmembrane region" description="Helical" evidence="2">
    <location>
        <begin position="203"/>
        <end position="223"/>
    </location>
</feature>
<geneLocation type="mitochondrion"/>
<accession>P92695</accession>
<reference key="1">
    <citation type="journal article" date="1996" name="J. Mol. Evol.">
        <title>The mitochondrial DNA molecule of Sumatran orangutan and a molecular proposal for two (Bornean and Sumatran) species of orangutan.</title>
        <authorList>
            <person name="Xu X."/>
            <person name="Arnason U."/>
        </authorList>
    </citation>
    <scope>NUCLEOTIDE SEQUENCE [LARGE SCALE GENOMIC DNA]</scope>
</reference>
<proteinExistence type="inferred from homology"/>
<dbReference type="EMBL" id="X97707">
    <property type="protein sequence ID" value="CAA66288.1"/>
    <property type="molecule type" value="Genomic_DNA"/>
</dbReference>
<dbReference type="RefSeq" id="NP_007840.1">
    <property type="nucleotide sequence ID" value="NC_002083.1"/>
</dbReference>
<dbReference type="SMR" id="P92695"/>
<dbReference type="FunCoup" id="P92695">
    <property type="interactions" value="413"/>
</dbReference>
<dbReference type="STRING" id="9601.ENSPPYP00000023444"/>
<dbReference type="Ensembl" id="ENSPPYT00000024440.1">
    <property type="protein sequence ID" value="ENSPPYP00000023444.1"/>
    <property type="gene ID" value="ENSPPYG00000020961.1"/>
</dbReference>
<dbReference type="GeneID" id="808485"/>
<dbReference type="KEGG" id="pon:808485"/>
<dbReference type="CTD" id="4508"/>
<dbReference type="eggNOG" id="KOG4665">
    <property type="taxonomic scope" value="Eukaryota"/>
</dbReference>
<dbReference type="GeneTree" id="ENSGT00390000005568"/>
<dbReference type="HOGENOM" id="CLU_041018_0_2_1"/>
<dbReference type="InParanoid" id="P92695"/>
<dbReference type="OMA" id="FFDQFMS"/>
<dbReference type="TreeFam" id="TF343395"/>
<dbReference type="Proteomes" id="UP000001595">
    <property type="component" value="Mitochondrion"/>
</dbReference>
<dbReference type="GO" id="GO:0005743">
    <property type="term" value="C:mitochondrial inner membrane"/>
    <property type="evidence" value="ECO:0007669"/>
    <property type="project" value="UniProtKB-SubCell"/>
</dbReference>
<dbReference type="GO" id="GO:0045259">
    <property type="term" value="C:proton-transporting ATP synthase complex"/>
    <property type="evidence" value="ECO:0000250"/>
    <property type="project" value="UniProtKB"/>
</dbReference>
<dbReference type="GO" id="GO:0015252">
    <property type="term" value="F:proton channel activity"/>
    <property type="evidence" value="ECO:0000250"/>
    <property type="project" value="UniProtKB"/>
</dbReference>
<dbReference type="GO" id="GO:0046933">
    <property type="term" value="F:proton-transporting ATP synthase activity, rotational mechanism"/>
    <property type="evidence" value="ECO:0007669"/>
    <property type="project" value="Ensembl"/>
</dbReference>
<dbReference type="GO" id="GO:0015986">
    <property type="term" value="P:proton motive force-driven ATP synthesis"/>
    <property type="evidence" value="ECO:0000250"/>
    <property type="project" value="UniProtKB"/>
</dbReference>
<dbReference type="GO" id="GO:0042776">
    <property type="term" value="P:proton motive force-driven mitochondrial ATP synthesis"/>
    <property type="evidence" value="ECO:0007669"/>
    <property type="project" value="Ensembl"/>
</dbReference>
<dbReference type="GO" id="GO:1902600">
    <property type="term" value="P:proton transmembrane transport"/>
    <property type="evidence" value="ECO:0000250"/>
    <property type="project" value="UniProtKB"/>
</dbReference>
<dbReference type="CDD" id="cd00310">
    <property type="entry name" value="ATP-synt_Fo_a_6"/>
    <property type="match status" value="1"/>
</dbReference>
<dbReference type="FunFam" id="1.20.120.220:FF:000004">
    <property type="entry name" value="ATP synthase subunit a"/>
    <property type="match status" value="1"/>
</dbReference>
<dbReference type="Gene3D" id="1.20.120.220">
    <property type="entry name" value="ATP synthase, F0 complex, subunit A"/>
    <property type="match status" value="1"/>
</dbReference>
<dbReference type="InterPro" id="IPR000568">
    <property type="entry name" value="ATP_synth_F0_asu"/>
</dbReference>
<dbReference type="InterPro" id="IPR023011">
    <property type="entry name" value="ATP_synth_F0_asu_AS"/>
</dbReference>
<dbReference type="InterPro" id="IPR045083">
    <property type="entry name" value="ATP_synth_F0_asu_bact/mt"/>
</dbReference>
<dbReference type="InterPro" id="IPR035908">
    <property type="entry name" value="F0_ATP_A_sf"/>
</dbReference>
<dbReference type="NCBIfam" id="TIGR01131">
    <property type="entry name" value="ATP_synt_6_or_A"/>
    <property type="match status" value="1"/>
</dbReference>
<dbReference type="PANTHER" id="PTHR11410">
    <property type="entry name" value="ATP SYNTHASE SUBUNIT A"/>
    <property type="match status" value="1"/>
</dbReference>
<dbReference type="PANTHER" id="PTHR11410:SF0">
    <property type="entry name" value="ATP SYNTHASE SUBUNIT A"/>
    <property type="match status" value="1"/>
</dbReference>
<dbReference type="Pfam" id="PF00119">
    <property type="entry name" value="ATP-synt_A"/>
    <property type="match status" value="1"/>
</dbReference>
<dbReference type="PRINTS" id="PR00123">
    <property type="entry name" value="ATPASEA"/>
</dbReference>
<dbReference type="SUPFAM" id="SSF81336">
    <property type="entry name" value="F1F0 ATP synthase subunit A"/>
    <property type="match status" value="1"/>
</dbReference>
<dbReference type="PROSITE" id="PS00449">
    <property type="entry name" value="ATPASE_A"/>
    <property type="match status" value="1"/>
</dbReference>
<sequence>MNESLFTPFITPTVLGLPAAVLVILFPPLLIPTSKHLINNRLIIIQQWLIRLILKQMMTTHNAKGRTWSLMLTSLIIFIASTNLLGLLPYSFTPTTQLSMNLAMAIPLWASTVAMGLRFKAKITLTHLLPQGTPTPLIPMLIIIETVSLFIQPLALAVRLTANITAGHLLMHLIGSSALAMLAINLPLTLITLTILTLLTILETAIALIQAYVFTLLVSLYLHDNS</sequence>